<organism>
    <name type="scientific">Chlorobaculum parvum (strain DSM 263 / NCIMB 8327)</name>
    <name type="common">Chlorobium vibrioforme subsp. thiosulfatophilum</name>
    <dbReference type="NCBI Taxonomy" id="517417"/>
    <lineage>
        <taxon>Bacteria</taxon>
        <taxon>Pseudomonadati</taxon>
        <taxon>Chlorobiota</taxon>
        <taxon>Chlorobiia</taxon>
        <taxon>Chlorobiales</taxon>
        <taxon>Chlorobiaceae</taxon>
        <taxon>Chlorobaculum</taxon>
    </lineage>
</organism>
<feature type="chain" id="PRO_1000097247" description="Lipoprotein signal peptidase">
    <location>
        <begin position="1"/>
        <end position="160"/>
    </location>
</feature>
<feature type="transmembrane region" description="Helical" evidence="1">
    <location>
        <begin position="59"/>
        <end position="79"/>
    </location>
</feature>
<feature type="transmembrane region" description="Helical" evidence="1">
    <location>
        <begin position="84"/>
        <end position="104"/>
    </location>
</feature>
<feature type="transmembrane region" description="Helical" evidence="1">
    <location>
        <begin position="132"/>
        <end position="152"/>
    </location>
</feature>
<feature type="active site" evidence="1">
    <location>
        <position position="113"/>
    </location>
</feature>
<feature type="active site" evidence="1">
    <location>
        <position position="139"/>
    </location>
</feature>
<proteinExistence type="inferred from homology"/>
<dbReference type="EC" id="3.4.23.36" evidence="1"/>
<dbReference type="EMBL" id="CP001099">
    <property type="protein sequence ID" value="ACF12045.1"/>
    <property type="molecule type" value="Genomic_DNA"/>
</dbReference>
<dbReference type="RefSeq" id="WP_012502878.1">
    <property type="nucleotide sequence ID" value="NC_011027.1"/>
</dbReference>
<dbReference type="SMR" id="B3QQ42"/>
<dbReference type="STRING" id="517417.Cpar_1650"/>
<dbReference type="KEGG" id="cpc:Cpar_1650"/>
<dbReference type="eggNOG" id="COG0597">
    <property type="taxonomic scope" value="Bacteria"/>
</dbReference>
<dbReference type="HOGENOM" id="CLU_083252_3_3_10"/>
<dbReference type="OrthoDB" id="9810259at2"/>
<dbReference type="UniPathway" id="UPA00665"/>
<dbReference type="Proteomes" id="UP000008811">
    <property type="component" value="Chromosome"/>
</dbReference>
<dbReference type="GO" id="GO:0005886">
    <property type="term" value="C:plasma membrane"/>
    <property type="evidence" value="ECO:0007669"/>
    <property type="project" value="UniProtKB-SubCell"/>
</dbReference>
<dbReference type="GO" id="GO:0004190">
    <property type="term" value="F:aspartic-type endopeptidase activity"/>
    <property type="evidence" value="ECO:0007669"/>
    <property type="project" value="UniProtKB-UniRule"/>
</dbReference>
<dbReference type="GO" id="GO:0006508">
    <property type="term" value="P:proteolysis"/>
    <property type="evidence" value="ECO:0007669"/>
    <property type="project" value="UniProtKB-KW"/>
</dbReference>
<dbReference type="HAMAP" id="MF_00161">
    <property type="entry name" value="LspA"/>
    <property type="match status" value="1"/>
</dbReference>
<dbReference type="InterPro" id="IPR001872">
    <property type="entry name" value="Peptidase_A8"/>
</dbReference>
<dbReference type="NCBIfam" id="TIGR00077">
    <property type="entry name" value="lspA"/>
    <property type="match status" value="1"/>
</dbReference>
<dbReference type="NCBIfam" id="NF011368">
    <property type="entry name" value="PRK14787.1"/>
    <property type="match status" value="1"/>
</dbReference>
<dbReference type="PANTHER" id="PTHR33695">
    <property type="entry name" value="LIPOPROTEIN SIGNAL PEPTIDASE"/>
    <property type="match status" value="1"/>
</dbReference>
<dbReference type="PANTHER" id="PTHR33695:SF1">
    <property type="entry name" value="LIPOPROTEIN SIGNAL PEPTIDASE"/>
    <property type="match status" value="1"/>
</dbReference>
<dbReference type="Pfam" id="PF01252">
    <property type="entry name" value="Peptidase_A8"/>
    <property type="match status" value="1"/>
</dbReference>
<dbReference type="PRINTS" id="PR00781">
    <property type="entry name" value="LIPOSIGPTASE"/>
</dbReference>
<dbReference type="PROSITE" id="PS00855">
    <property type="entry name" value="SPASE_II"/>
    <property type="match status" value="1"/>
</dbReference>
<reference key="1">
    <citation type="submission" date="2008-06" db="EMBL/GenBank/DDBJ databases">
        <title>Complete sequence of Chlorobaculum parvum NCIB 8327.</title>
        <authorList>
            <consortium name="US DOE Joint Genome Institute"/>
            <person name="Lucas S."/>
            <person name="Copeland A."/>
            <person name="Lapidus A."/>
            <person name="Glavina del Rio T."/>
            <person name="Dalin E."/>
            <person name="Tice H."/>
            <person name="Bruce D."/>
            <person name="Goodwin L."/>
            <person name="Pitluck S."/>
            <person name="Schmutz J."/>
            <person name="Larimer F."/>
            <person name="Land M."/>
            <person name="Hauser L."/>
            <person name="Kyrpides N."/>
            <person name="Mikhailova N."/>
            <person name="Zhao F."/>
            <person name="Li T."/>
            <person name="Liu Z."/>
            <person name="Overmann J."/>
            <person name="Bryant D.A."/>
            <person name="Richardson P."/>
        </authorList>
    </citation>
    <scope>NUCLEOTIDE SEQUENCE [LARGE SCALE GENOMIC DNA]</scope>
    <source>
        <strain>DSM 263 / NCIMB 8327</strain>
    </source>
</reference>
<evidence type="ECO:0000255" key="1">
    <source>
        <dbReference type="HAMAP-Rule" id="MF_00161"/>
    </source>
</evidence>
<comment type="function">
    <text evidence="1">This protein specifically catalyzes the removal of signal peptides from prolipoproteins.</text>
</comment>
<comment type="catalytic activity">
    <reaction evidence="1">
        <text>Release of signal peptides from bacterial membrane prolipoproteins. Hydrolyzes -Xaa-Yaa-Zaa-|-(S,diacylglyceryl)Cys-, in which Xaa is hydrophobic (preferably Leu), and Yaa (Ala or Ser) and Zaa (Gly or Ala) have small, neutral side chains.</text>
        <dbReference type="EC" id="3.4.23.36"/>
    </reaction>
</comment>
<comment type="pathway">
    <text evidence="1">Protein modification; lipoprotein biosynthesis (signal peptide cleavage).</text>
</comment>
<comment type="subcellular location">
    <subcellularLocation>
        <location evidence="1">Cell inner membrane</location>
        <topology evidence="1">Multi-pass membrane protein</topology>
    </subcellularLocation>
</comment>
<comment type="similarity">
    <text evidence="1">Belongs to the peptidase A8 family.</text>
</comment>
<name>LSPA_CHLP8</name>
<accession>B3QQ42</accession>
<keyword id="KW-0064">Aspartyl protease</keyword>
<keyword id="KW-0997">Cell inner membrane</keyword>
<keyword id="KW-1003">Cell membrane</keyword>
<keyword id="KW-0378">Hydrolase</keyword>
<keyword id="KW-0472">Membrane</keyword>
<keyword id="KW-0645">Protease</keyword>
<keyword id="KW-0812">Transmembrane</keyword>
<keyword id="KW-1133">Transmembrane helix</keyword>
<protein>
    <recommendedName>
        <fullName evidence="1">Lipoprotein signal peptidase</fullName>
        <ecNumber evidence="1">3.4.23.36</ecNumber>
    </recommendedName>
    <alternativeName>
        <fullName evidence="1">Prolipoprotein signal peptidase</fullName>
    </alternativeName>
    <alternativeName>
        <fullName evidence="1">Signal peptidase II</fullName>
        <shortName evidence="1">SPase II</shortName>
    </alternativeName>
</protein>
<gene>
    <name evidence="1" type="primary">lspA</name>
    <name type="ordered locus">Cpar_1650</name>
</gene>
<sequence>MVQFYLLTLVFIVVDRFAKLFAINVLRDLPNGIVLVPDWFKLMYAENLGIAFGLRLLPPEGILLLALAISAGLTWYVWISQNRSPLFILTFALILGGGLGNLIDRLIFGHVVDFIYFDIYQGTLFGKYVSLWPIFNIADACITIGACLLFFFHDKIFNPR</sequence>